<organism>
    <name type="scientific">Helicobacter acinonychis (strain Sheeba)</name>
    <dbReference type="NCBI Taxonomy" id="382638"/>
    <lineage>
        <taxon>Bacteria</taxon>
        <taxon>Pseudomonadati</taxon>
        <taxon>Campylobacterota</taxon>
        <taxon>Epsilonproteobacteria</taxon>
        <taxon>Campylobacterales</taxon>
        <taxon>Helicobacteraceae</taxon>
        <taxon>Helicobacter</taxon>
    </lineage>
</organism>
<comment type="function">
    <text evidence="1">One of the essential components for the initiation of protein synthesis. Stabilizes the binding of IF-2 and IF-3 on the 30S subunit to which N-formylmethionyl-tRNA(fMet) subsequently binds. Helps modulate mRNA selection, yielding the 30S pre-initiation complex (PIC). Upon addition of the 50S ribosomal subunit IF-1, IF-2 and IF-3 are released leaving the mature 70S translation initiation complex.</text>
</comment>
<comment type="subunit">
    <text evidence="1">Component of the 30S ribosomal translation pre-initiation complex which assembles on the 30S ribosome in the order IF-2 and IF-3, IF-1 and N-formylmethionyl-tRNA(fMet); mRNA recruitment can occur at any time during PIC assembly.</text>
</comment>
<comment type="subcellular location">
    <subcellularLocation>
        <location evidence="1">Cytoplasm</location>
    </subcellularLocation>
</comment>
<comment type="similarity">
    <text evidence="1">Belongs to the IF-1 family.</text>
</comment>
<reference key="1">
    <citation type="journal article" date="2006" name="PLoS Genet.">
        <title>Who ate whom? Adaptive Helicobacter genomic changes that accompanied a host jump from early humans to large felines.</title>
        <authorList>
            <person name="Eppinger M."/>
            <person name="Baar C."/>
            <person name="Linz B."/>
            <person name="Raddatz G."/>
            <person name="Lanz C."/>
            <person name="Keller H."/>
            <person name="Morelli G."/>
            <person name="Gressmann H."/>
            <person name="Achtman M."/>
            <person name="Schuster S.C."/>
        </authorList>
    </citation>
    <scope>NUCLEOTIDE SEQUENCE [LARGE SCALE GENOMIC DNA]</scope>
    <source>
        <strain>Sheeba</strain>
    </source>
</reference>
<sequence length="72" mass="8376">MARDDVIEVDGKVIEALPNATFKVELDNKHVVLCRISGKMRMHYIRIALGDRVKLELTPYSLDRGRITFRYK</sequence>
<gene>
    <name evidence="1" type="primary">infA</name>
    <name type="ordered locus">Hac_0156</name>
</gene>
<proteinExistence type="inferred from homology"/>
<evidence type="ECO:0000255" key="1">
    <source>
        <dbReference type="HAMAP-Rule" id="MF_00075"/>
    </source>
</evidence>
<accession>Q17ZB8</accession>
<dbReference type="EMBL" id="AM260522">
    <property type="protein sequence ID" value="CAJ99008.1"/>
    <property type="molecule type" value="Genomic_DNA"/>
</dbReference>
<dbReference type="RefSeq" id="WP_011577126.1">
    <property type="nucleotide sequence ID" value="NC_008229.1"/>
</dbReference>
<dbReference type="SMR" id="Q17ZB8"/>
<dbReference type="STRING" id="382638.Hac_0156"/>
<dbReference type="GeneID" id="31757686"/>
<dbReference type="KEGG" id="hac:Hac_0156"/>
<dbReference type="eggNOG" id="COG0361">
    <property type="taxonomic scope" value="Bacteria"/>
</dbReference>
<dbReference type="HOGENOM" id="CLU_151267_1_0_7"/>
<dbReference type="OrthoDB" id="9803250at2"/>
<dbReference type="BioCyc" id="HACI382638:HAC_RS00685-MONOMER"/>
<dbReference type="Proteomes" id="UP000000775">
    <property type="component" value="Chromosome"/>
</dbReference>
<dbReference type="GO" id="GO:0005829">
    <property type="term" value="C:cytosol"/>
    <property type="evidence" value="ECO:0007669"/>
    <property type="project" value="TreeGrafter"/>
</dbReference>
<dbReference type="GO" id="GO:0043022">
    <property type="term" value="F:ribosome binding"/>
    <property type="evidence" value="ECO:0007669"/>
    <property type="project" value="UniProtKB-UniRule"/>
</dbReference>
<dbReference type="GO" id="GO:0019843">
    <property type="term" value="F:rRNA binding"/>
    <property type="evidence" value="ECO:0007669"/>
    <property type="project" value="UniProtKB-UniRule"/>
</dbReference>
<dbReference type="GO" id="GO:0003743">
    <property type="term" value="F:translation initiation factor activity"/>
    <property type="evidence" value="ECO:0007669"/>
    <property type="project" value="UniProtKB-UniRule"/>
</dbReference>
<dbReference type="CDD" id="cd04451">
    <property type="entry name" value="S1_IF1"/>
    <property type="match status" value="1"/>
</dbReference>
<dbReference type="FunFam" id="2.40.50.140:FF:000002">
    <property type="entry name" value="Translation initiation factor IF-1"/>
    <property type="match status" value="1"/>
</dbReference>
<dbReference type="Gene3D" id="2.40.50.140">
    <property type="entry name" value="Nucleic acid-binding proteins"/>
    <property type="match status" value="1"/>
</dbReference>
<dbReference type="HAMAP" id="MF_00075">
    <property type="entry name" value="IF_1"/>
    <property type="match status" value="1"/>
</dbReference>
<dbReference type="InterPro" id="IPR012340">
    <property type="entry name" value="NA-bd_OB-fold"/>
</dbReference>
<dbReference type="InterPro" id="IPR006196">
    <property type="entry name" value="RNA-binding_domain_S1_IF1"/>
</dbReference>
<dbReference type="InterPro" id="IPR003029">
    <property type="entry name" value="S1_domain"/>
</dbReference>
<dbReference type="InterPro" id="IPR004368">
    <property type="entry name" value="TIF_IF1"/>
</dbReference>
<dbReference type="NCBIfam" id="TIGR00008">
    <property type="entry name" value="infA"/>
    <property type="match status" value="1"/>
</dbReference>
<dbReference type="PANTHER" id="PTHR33370">
    <property type="entry name" value="TRANSLATION INITIATION FACTOR IF-1, CHLOROPLASTIC"/>
    <property type="match status" value="1"/>
</dbReference>
<dbReference type="PANTHER" id="PTHR33370:SF1">
    <property type="entry name" value="TRANSLATION INITIATION FACTOR IF-1, CHLOROPLASTIC"/>
    <property type="match status" value="1"/>
</dbReference>
<dbReference type="Pfam" id="PF01176">
    <property type="entry name" value="eIF-1a"/>
    <property type="match status" value="1"/>
</dbReference>
<dbReference type="SMART" id="SM00316">
    <property type="entry name" value="S1"/>
    <property type="match status" value="1"/>
</dbReference>
<dbReference type="SUPFAM" id="SSF50249">
    <property type="entry name" value="Nucleic acid-binding proteins"/>
    <property type="match status" value="1"/>
</dbReference>
<dbReference type="PROSITE" id="PS50832">
    <property type="entry name" value="S1_IF1_TYPE"/>
    <property type="match status" value="1"/>
</dbReference>
<protein>
    <recommendedName>
        <fullName evidence="1">Translation initiation factor IF-1</fullName>
    </recommendedName>
</protein>
<name>IF1_HELAH</name>
<keyword id="KW-0963">Cytoplasm</keyword>
<keyword id="KW-0396">Initiation factor</keyword>
<keyword id="KW-0648">Protein biosynthesis</keyword>
<keyword id="KW-0694">RNA-binding</keyword>
<keyword id="KW-0699">rRNA-binding</keyword>
<feature type="chain" id="PRO_0000338838" description="Translation initiation factor IF-1">
    <location>
        <begin position="1"/>
        <end position="72"/>
    </location>
</feature>
<feature type="domain" description="S1-like" evidence="1">
    <location>
        <begin position="1"/>
        <end position="72"/>
    </location>
</feature>